<feature type="initiator methionine" description="Removed" evidence="1">
    <location>
        <position position="1"/>
    </location>
</feature>
<feature type="chain" id="PRO_0000185885" description="Glutathione S-transferase omega-1">
    <location>
        <begin position="2"/>
        <end position="240"/>
    </location>
</feature>
<feature type="domain" description="GST N-terminal">
    <location>
        <begin position="22"/>
        <end position="101"/>
    </location>
</feature>
<feature type="domain" description="GST C-terminal">
    <location>
        <begin position="106"/>
        <end position="227"/>
    </location>
</feature>
<feature type="active site" description="Nucleophile" evidence="1">
    <location>
        <position position="32"/>
    </location>
</feature>
<feature type="binding site" evidence="1">
    <location>
        <position position="59"/>
    </location>
    <ligand>
        <name>glutathione</name>
        <dbReference type="ChEBI" id="CHEBI:57925"/>
    </ligand>
</feature>
<feature type="binding site" evidence="1">
    <location>
        <position position="72"/>
    </location>
    <ligand>
        <name>glutathione</name>
        <dbReference type="ChEBI" id="CHEBI:57925"/>
    </ligand>
</feature>
<feature type="binding site" evidence="1">
    <location>
        <begin position="85"/>
        <end position="86"/>
    </location>
    <ligand>
        <name>glutathione</name>
        <dbReference type="ChEBI" id="CHEBI:57925"/>
    </ligand>
</feature>
<feature type="modified residue" description="N-acetylserine" evidence="1">
    <location>
        <position position="2"/>
    </location>
</feature>
<feature type="modified residue" description="N6-acetyllysine" evidence="1">
    <location>
        <position position="57"/>
    </location>
</feature>
<feature type="modified residue" description="Phosphoserine" evidence="3">
    <location>
        <position position="129"/>
    </location>
</feature>
<feature type="modified residue" description="N6-acetyllysine" evidence="1">
    <location>
        <position position="152"/>
    </location>
</feature>
<gene>
    <name type="primary">Gsto1</name>
    <name type="synonym">Gstx</name>
    <name type="synonym">Gtsttl</name>
</gene>
<dbReference type="EC" id="2.5.1.18" evidence="1"/>
<dbReference type="EC" id="1.8.5.1" evidence="1"/>
<dbReference type="EC" id="1.20.4.2" evidence="1"/>
<dbReference type="EMBL" id="U80819">
    <property type="protein sequence ID" value="AAB70110.1"/>
    <property type="molecule type" value="mRNA"/>
</dbReference>
<dbReference type="EMBL" id="AK027922">
    <property type="protein sequence ID" value="BAC25667.1"/>
    <property type="molecule type" value="mRNA"/>
</dbReference>
<dbReference type="EMBL" id="AK146834">
    <property type="protein sequence ID" value="BAE27469.1"/>
    <property type="molecule type" value="mRNA"/>
</dbReference>
<dbReference type="EMBL" id="AK168383">
    <property type="protein sequence ID" value="BAE40311.1"/>
    <property type="molecule type" value="mRNA"/>
</dbReference>
<dbReference type="EMBL" id="BC085165">
    <property type="protein sequence ID" value="AAH85165.1"/>
    <property type="molecule type" value="mRNA"/>
</dbReference>
<dbReference type="CCDS" id="CCDS29893.1"/>
<dbReference type="RefSeq" id="NP_034492.1">
    <property type="nucleotide sequence ID" value="NM_010362.3"/>
</dbReference>
<dbReference type="SMR" id="O09131"/>
<dbReference type="BioGRID" id="200104">
    <property type="interactions" value="5"/>
</dbReference>
<dbReference type="FunCoup" id="O09131">
    <property type="interactions" value="973"/>
</dbReference>
<dbReference type="IntAct" id="O09131">
    <property type="interactions" value="1"/>
</dbReference>
<dbReference type="STRING" id="10090.ENSMUSP00000026050"/>
<dbReference type="ChEMBL" id="CHEMBL4523122"/>
<dbReference type="GlyGen" id="O09131">
    <property type="glycosylation" value="1 site, 1 O-linked glycan (1 site)"/>
</dbReference>
<dbReference type="iPTMnet" id="O09131"/>
<dbReference type="PhosphoSitePlus" id="O09131"/>
<dbReference type="SwissPalm" id="O09131"/>
<dbReference type="REPRODUCTION-2DPAGE" id="IPI00114285"/>
<dbReference type="CPTAC" id="non-CPTAC-3712"/>
<dbReference type="jPOST" id="O09131"/>
<dbReference type="PaxDb" id="10090-ENSMUSP00000026050"/>
<dbReference type="PeptideAtlas" id="O09131"/>
<dbReference type="ProteomicsDB" id="271106"/>
<dbReference type="Pumba" id="O09131"/>
<dbReference type="Antibodypedia" id="31606">
    <property type="antibodies" value="307 antibodies from 34 providers"/>
</dbReference>
<dbReference type="DNASU" id="14873"/>
<dbReference type="Ensembl" id="ENSMUST00000026050.8">
    <property type="protein sequence ID" value="ENSMUSP00000026050.8"/>
    <property type="gene ID" value="ENSMUSG00000025068.9"/>
</dbReference>
<dbReference type="GeneID" id="14873"/>
<dbReference type="KEGG" id="mmu:14873"/>
<dbReference type="UCSC" id="uc008hvq.1">
    <property type="organism name" value="mouse"/>
</dbReference>
<dbReference type="AGR" id="MGI:1342273"/>
<dbReference type="CTD" id="9446"/>
<dbReference type="MGI" id="MGI:1342273">
    <property type="gene designation" value="Gsto1"/>
</dbReference>
<dbReference type="VEuPathDB" id="HostDB:ENSMUSG00000025068"/>
<dbReference type="eggNOG" id="KOG0406">
    <property type="taxonomic scope" value="Eukaryota"/>
</dbReference>
<dbReference type="GeneTree" id="ENSGT00940000155351"/>
<dbReference type="HOGENOM" id="CLU_011226_9_2_1"/>
<dbReference type="InParanoid" id="O09131"/>
<dbReference type="OMA" id="ADHYSHR"/>
<dbReference type="OrthoDB" id="4951845at2759"/>
<dbReference type="PhylomeDB" id="O09131"/>
<dbReference type="TreeFam" id="TF105325"/>
<dbReference type="Reactome" id="R-MMU-156581">
    <property type="pathway name" value="Methylation"/>
</dbReference>
<dbReference type="Reactome" id="R-MMU-156590">
    <property type="pathway name" value="Glutathione conjugation"/>
</dbReference>
<dbReference type="Reactome" id="R-MMU-196836">
    <property type="pathway name" value="Vitamin C (ascorbate) metabolism"/>
</dbReference>
<dbReference type="BioGRID-ORCS" id="14873">
    <property type="hits" value="3 hits in 78 CRISPR screens"/>
</dbReference>
<dbReference type="ChiTaRS" id="Gsto1">
    <property type="organism name" value="mouse"/>
</dbReference>
<dbReference type="PRO" id="PR:O09131"/>
<dbReference type="Proteomes" id="UP000000589">
    <property type="component" value="Chromosome 19"/>
</dbReference>
<dbReference type="RNAct" id="O09131">
    <property type="molecule type" value="protein"/>
</dbReference>
<dbReference type="Bgee" id="ENSMUSG00000025068">
    <property type="expression patterns" value="Expressed in conjunctival fornix and 271 other cell types or tissues"/>
</dbReference>
<dbReference type="ExpressionAtlas" id="O09131">
    <property type="expression patterns" value="baseline and differential"/>
</dbReference>
<dbReference type="GO" id="GO:0005737">
    <property type="term" value="C:cytoplasm"/>
    <property type="evidence" value="ECO:0000250"/>
    <property type="project" value="UniProtKB"/>
</dbReference>
<dbReference type="GO" id="GO:0005829">
    <property type="term" value="C:cytosol"/>
    <property type="evidence" value="ECO:0007669"/>
    <property type="project" value="UniProtKB-SubCell"/>
</dbReference>
<dbReference type="GO" id="GO:0045174">
    <property type="term" value="F:glutathione dehydrogenase (ascorbate) activity"/>
    <property type="evidence" value="ECO:0000250"/>
    <property type="project" value="UniProtKB"/>
</dbReference>
<dbReference type="GO" id="GO:0004364">
    <property type="term" value="F:glutathione transferase activity"/>
    <property type="evidence" value="ECO:0000250"/>
    <property type="project" value="UniProtKB"/>
</dbReference>
<dbReference type="GO" id="GO:0050610">
    <property type="term" value="F:methylarsonate reductase activity"/>
    <property type="evidence" value="ECO:0007669"/>
    <property type="project" value="UniProtKB-EC"/>
</dbReference>
<dbReference type="GO" id="GO:0016491">
    <property type="term" value="F:oxidoreductase activity"/>
    <property type="evidence" value="ECO:0000250"/>
    <property type="project" value="UniProtKB"/>
</dbReference>
<dbReference type="GO" id="GO:0071243">
    <property type="term" value="P:cellular response to arsenic-containing substance"/>
    <property type="evidence" value="ECO:0000250"/>
    <property type="project" value="UniProtKB"/>
</dbReference>
<dbReference type="GO" id="GO:0019852">
    <property type="term" value="P:L-ascorbic acid metabolic process"/>
    <property type="evidence" value="ECO:0000250"/>
    <property type="project" value="UniProtKB"/>
</dbReference>
<dbReference type="GO" id="GO:0051280">
    <property type="term" value="P:negative regulation of release of sequestered calcium ion into cytosol"/>
    <property type="evidence" value="ECO:0007669"/>
    <property type="project" value="Ensembl"/>
</dbReference>
<dbReference type="GO" id="GO:0051281">
    <property type="term" value="P:positive regulation of release of sequestered calcium ion into cytosol"/>
    <property type="evidence" value="ECO:0007669"/>
    <property type="project" value="Ensembl"/>
</dbReference>
<dbReference type="GO" id="GO:0014810">
    <property type="term" value="P:positive regulation of skeletal muscle contraction by regulation of release of sequestered calcium ion"/>
    <property type="evidence" value="ECO:0007669"/>
    <property type="project" value="Ensembl"/>
</dbReference>
<dbReference type="GO" id="GO:0010881">
    <property type="term" value="P:regulation of cardiac muscle contraction by regulation of the release of sequestered calcium ion"/>
    <property type="evidence" value="ECO:0007669"/>
    <property type="project" value="Ensembl"/>
</dbReference>
<dbReference type="GO" id="GO:0042178">
    <property type="term" value="P:xenobiotic catabolic process"/>
    <property type="evidence" value="ECO:0000250"/>
    <property type="project" value="UniProtKB"/>
</dbReference>
<dbReference type="CDD" id="cd03184">
    <property type="entry name" value="GST_C_Omega"/>
    <property type="match status" value="1"/>
</dbReference>
<dbReference type="CDD" id="cd03055">
    <property type="entry name" value="GST_N_Omega"/>
    <property type="match status" value="1"/>
</dbReference>
<dbReference type="FunFam" id="1.20.1050.10:FF:000009">
    <property type="entry name" value="Glutathione S-transferase omega-1"/>
    <property type="match status" value="1"/>
</dbReference>
<dbReference type="FunFam" id="3.40.30.10:FF:000075">
    <property type="entry name" value="Glutathione S-transferase omega-1"/>
    <property type="match status" value="1"/>
</dbReference>
<dbReference type="Gene3D" id="1.20.1050.10">
    <property type="match status" value="1"/>
</dbReference>
<dbReference type="Gene3D" id="3.40.30.10">
    <property type="entry name" value="Glutaredoxin"/>
    <property type="match status" value="1"/>
</dbReference>
<dbReference type="InterPro" id="IPR010987">
    <property type="entry name" value="Glutathione-S-Trfase_C-like"/>
</dbReference>
<dbReference type="InterPro" id="IPR036282">
    <property type="entry name" value="Glutathione-S-Trfase_C_sf"/>
</dbReference>
<dbReference type="InterPro" id="IPR040079">
    <property type="entry name" value="Glutathione_S-Trfase"/>
</dbReference>
<dbReference type="InterPro" id="IPR004045">
    <property type="entry name" value="Glutathione_S-Trfase_N"/>
</dbReference>
<dbReference type="InterPro" id="IPR004046">
    <property type="entry name" value="GST_C"/>
</dbReference>
<dbReference type="InterPro" id="IPR005442">
    <property type="entry name" value="GST_omega"/>
</dbReference>
<dbReference type="InterPro" id="IPR050983">
    <property type="entry name" value="GST_Omega/HSP26"/>
</dbReference>
<dbReference type="InterPro" id="IPR036249">
    <property type="entry name" value="Thioredoxin-like_sf"/>
</dbReference>
<dbReference type="PANTHER" id="PTHR43968">
    <property type="match status" value="1"/>
</dbReference>
<dbReference type="PANTHER" id="PTHR43968:SF5">
    <property type="entry name" value="GLUTATHIONE S-TRANSFERASE OMEGA-1"/>
    <property type="match status" value="1"/>
</dbReference>
<dbReference type="Pfam" id="PF00043">
    <property type="entry name" value="GST_C"/>
    <property type="match status" value="1"/>
</dbReference>
<dbReference type="Pfam" id="PF13409">
    <property type="entry name" value="GST_N_2"/>
    <property type="match status" value="1"/>
</dbReference>
<dbReference type="PRINTS" id="PR01625">
    <property type="entry name" value="GSTRNSFRASEO"/>
</dbReference>
<dbReference type="SFLD" id="SFLDS00019">
    <property type="entry name" value="Glutathione_Transferase_(cytos"/>
    <property type="match status" value="1"/>
</dbReference>
<dbReference type="SFLD" id="SFLDG00358">
    <property type="entry name" value="Main_(cytGST)"/>
    <property type="match status" value="1"/>
</dbReference>
<dbReference type="SUPFAM" id="SSF47616">
    <property type="entry name" value="GST C-terminal domain-like"/>
    <property type="match status" value="1"/>
</dbReference>
<dbReference type="SUPFAM" id="SSF52833">
    <property type="entry name" value="Thioredoxin-like"/>
    <property type="match status" value="1"/>
</dbReference>
<dbReference type="PROSITE" id="PS50405">
    <property type="entry name" value="GST_CTER"/>
    <property type="match status" value="1"/>
</dbReference>
<dbReference type="PROSITE" id="PS50404">
    <property type="entry name" value="GST_NTER"/>
    <property type="match status" value="1"/>
</dbReference>
<protein>
    <recommendedName>
        <fullName>Glutathione S-transferase omega-1</fullName>
        <shortName>GSTO-1</shortName>
        <ecNumber evidence="1">2.5.1.18</ecNumber>
    </recommendedName>
    <alternativeName>
        <fullName>Glutathione S-transferase omega 1-1</fullName>
        <shortName>GSTO 1-1</shortName>
    </alternativeName>
    <alternativeName>
        <fullName>Glutathione-dependent dehydroascorbate reductase</fullName>
        <ecNumber evidence="1">1.8.5.1</ecNumber>
    </alternativeName>
    <alternativeName>
        <fullName>Monomethylarsonic acid reductase</fullName>
        <shortName>MMA(V) reductase</shortName>
        <ecNumber evidence="1">1.20.4.2</ecNumber>
    </alternativeName>
    <alternativeName>
        <fullName>S-(Phenacyl)glutathione reductase</fullName>
        <shortName>SPG-R</shortName>
    </alternativeName>
    <alternativeName>
        <fullName>p28</fullName>
    </alternativeName>
</protein>
<name>GSTO1_MOUSE</name>
<evidence type="ECO:0000250" key="1">
    <source>
        <dbReference type="UniProtKB" id="P78417"/>
    </source>
</evidence>
<evidence type="ECO:0000305" key="2"/>
<evidence type="ECO:0007744" key="3">
    <source>
    </source>
</evidence>
<reference key="1">
    <citation type="journal article" date="1999" name="J. Biol. Chem.">
        <title>The cloning and characterization of a new stress response protein. A mammalian member of a family of theta class glutathione s-transferase-like proteins.</title>
        <authorList>
            <person name="Kodym R."/>
            <person name="Calkins P."/>
            <person name="Story M.D."/>
        </authorList>
    </citation>
    <scope>NUCLEOTIDE SEQUENCE [MRNA]</scope>
</reference>
<reference key="2">
    <citation type="journal article" date="2005" name="Science">
        <title>The transcriptional landscape of the mammalian genome.</title>
        <authorList>
            <person name="Carninci P."/>
            <person name="Kasukawa T."/>
            <person name="Katayama S."/>
            <person name="Gough J."/>
            <person name="Frith M.C."/>
            <person name="Maeda N."/>
            <person name="Oyama R."/>
            <person name="Ravasi T."/>
            <person name="Lenhard B."/>
            <person name="Wells C."/>
            <person name="Kodzius R."/>
            <person name="Shimokawa K."/>
            <person name="Bajic V.B."/>
            <person name="Brenner S.E."/>
            <person name="Batalov S."/>
            <person name="Forrest A.R."/>
            <person name="Zavolan M."/>
            <person name="Davis M.J."/>
            <person name="Wilming L.G."/>
            <person name="Aidinis V."/>
            <person name="Allen J.E."/>
            <person name="Ambesi-Impiombato A."/>
            <person name="Apweiler R."/>
            <person name="Aturaliya R.N."/>
            <person name="Bailey T.L."/>
            <person name="Bansal M."/>
            <person name="Baxter L."/>
            <person name="Beisel K.W."/>
            <person name="Bersano T."/>
            <person name="Bono H."/>
            <person name="Chalk A.M."/>
            <person name="Chiu K.P."/>
            <person name="Choudhary V."/>
            <person name="Christoffels A."/>
            <person name="Clutterbuck D.R."/>
            <person name="Crowe M.L."/>
            <person name="Dalla E."/>
            <person name="Dalrymple B.P."/>
            <person name="de Bono B."/>
            <person name="Della Gatta G."/>
            <person name="di Bernardo D."/>
            <person name="Down T."/>
            <person name="Engstrom P."/>
            <person name="Fagiolini M."/>
            <person name="Faulkner G."/>
            <person name="Fletcher C.F."/>
            <person name="Fukushima T."/>
            <person name="Furuno M."/>
            <person name="Futaki S."/>
            <person name="Gariboldi M."/>
            <person name="Georgii-Hemming P."/>
            <person name="Gingeras T.R."/>
            <person name="Gojobori T."/>
            <person name="Green R.E."/>
            <person name="Gustincich S."/>
            <person name="Harbers M."/>
            <person name="Hayashi Y."/>
            <person name="Hensch T.K."/>
            <person name="Hirokawa N."/>
            <person name="Hill D."/>
            <person name="Huminiecki L."/>
            <person name="Iacono M."/>
            <person name="Ikeo K."/>
            <person name="Iwama A."/>
            <person name="Ishikawa T."/>
            <person name="Jakt M."/>
            <person name="Kanapin A."/>
            <person name="Katoh M."/>
            <person name="Kawasawa Y."/>
            <person name="Kelso J."/>
            <person name="Kitamura H."/>
            <person name="Kitano H."/>
            <person name="Kollias G."/>
            <person name="Krishnan S.P."/>
            <person name="Kruger A."/>
            <person name="Kummerfeld S.K."/>
            <person name="Kurochkin I.V."/>
            <person name="Lareau L.F."/>
            <person name="Lazarevic D."/>
            <person name="Lipovich L."/>
            <person name="Liu J."/>
            <person name="Liuni S."/>
            <person name="McWilliam S."/>
            <person name="Madan Babu M."/>
            <person name="Madera M."/>
            <person name="Marchionni L."/>
            <person name="Matsuda H."/>
            <person name="Matsuzawa S."/>
            <person name="Miki H."/>
            <person name="Mignone F."/>
            <person name="Miyake S."/>
            <person name="Morris K."/>
            <person name="Mottagui-Tabar S."/>
            <person name="Mulder N."/>
            <person name="Nakano N."/>
            <person name="Nakauchi H."/>
            <person name="Ng P."/>
            <person name="Nilsson R."/>
            <person name="Nishiguchi S."/>
            <person name="Nishikawa S."/>
            <person name="Nori F."/>
            <person name="Ohara O."/>
            <person name="Okazaki Y."/>
            <person name="Orlando V."/>
            <person name="Pang K.C."/>
            <person name="Pavan W.J."/>
            <person name="Pavesi G."/>
            <person name="Pesole G."/>
            <person name="Petrovsky N."/>
            <person name="Piazza S."/>
            <person name="Reed J."/>
            <person name="Reid J.F."/>
            <person name="Ring B.Z."/>
            <person name="Ringwald M."/>
            <person name="Rost B."/>
            <person name="Ruan Y."/>
            <person name="Salzberg S.L."/>
            <person name="Sandelin A."/>
            <person name="Schneider C."/>
            <person name="Schoenbach C."/>
            <person name="Sekiguchi K."/>
            <person name="Semple C.A."/>
            <person name="Seno S."/>
            <person name="Sessa L."/>
            <person name="Sheng Y."/>
            <person name="Shibata Y."/>
            <person name="Shimada H."/>
            <person name="Shimada K."/>
            <person name="Silva D."/>
            <person name="Sinclair B."/>
            <person name="Sperling S."/>
            <person name="Stupka E."/>
            <person name="Sugiura K."/>
            <person name="Sultana R."/>
            <person name="Takenaka Y."/>
            <person name="Taki K."/>
            <person name="Tammoja K."/>
            <person name="Tan S.L."/>
            <person name="Tang S."/>
            <person name="Taylor M.S."/>
            <person name="Tegner J."/>
            <person name="Teichmann S.A."/>
            <person name="Ueda H.R."/>
            <person name="van Nimwegen E."/>
            <person name="Verardo R."/>
            <person name="Wei C.L."/>
            <person name="Yagi K."/>
            <person name="Yamanishi H."/>
            <person name="Zabarovsky E."/>
            <person name="Zhu S."/>
            <person name="Zimmer A."/>
            <person name="Hide W."/>
            <person name="Bult C."/>
            <person name="Grimmond S.M."/>
            <person name="Teasdale R.D."/>
            <person name="Liu E.T."/>
            <person name="Brusic V."/>
            <person name="Quackenbush J."/>
            <person name="Wahlestedt C."/>
            <person name="Mattick J.S."/>
            <person name="Hume D.A."/>
            <person name="Kai C."/>
            <person name="Sasaki D."/>
            <person name="Tomaru Y."/>
            <person name="Fukuda S."/>
            <person name="Kanamori-Katayama M."/>
            <person name="Suzuki M."/>
            <person name="Aoki J."/>
            <person name="Arakawa T."/>
            <person name="Iida J."/>
            <person name="Imamura K."/>
            <person name="Itoh M."/>
            <person name="Kato T."/>
            <person name="Kawaji H."/>
            <person name="Kawagashira N."/>
            <person name="Kawashima T."/>
            <person name="Kojima M."/>
            <person name="Kondo S."/>
            <person name="Konno H."/>
            <person name="Nakano K."/>
            <person name="Ninomiya N."/>
            <person name="Nishio T."/>
            <person name="Okada M."/>
            <person name="Plessy C."/>
            <person name="Shibata K."/>
            <person name="Shiraki T."/>
            <person name="Suzuki S."/>
            <person name="Tagami M."/>
            <person name="Waki K."/>
            <person name="Watahiki A."/>
            <person name="Okamura-Oho Y."/>
            <person name="Suzuki H."/>
            <person name="Kawai J."/>
            <person name="Hayashizaki Y."/>
        </authorList>
    </citation>
    <scope>NUCLEOTIDE SEQUENCE [LARGE SCALE MRNA]</scope>
    <source>
        <strain>C57BL/6J</strain>
        <tissue>Amnion</tissue>
    </source>
</reference>
<reference key="3">
    <citation type="journal article" date="2004" name="Genome Res.">
        <title>The status, quality, and expansion of the NIH full-length cDNA project: the Mammalian Gene Collection (MGC).</title>
        <authorList>
            <consortium name="The MGC Project Team"/>
        </authorList>
    </citation>
    <scope>NUCLEOTIDE SEQUENCE [LARGE SCALE MRNA]</scope>
    <source>
        <strain>C57BL/6J</strain>
        <tissue>Brain</tissue>
    </source>
</reference>
<reference key="4">
    <citation type="journal article" date="2010" name="Cell">
        <title>A tissue-specific atlas of mouse protein phosphorylation and expression.</title>
        <authorList>
            <person name="Huttlin E.L."/>
            <person name="Jedrychowski M.P."/>
            <person name="Elias J.E."/>
            <person name="Goswami T."/>
            <person name="Rad R."/>
            <person name="Beausoleil S.A."/>
            <person name="Villen J."/>
            <person name="Haas W."/>
            <person name="Sowa M.E."/>
            <person name="Gygi S.P."/>
        </authorList>
    </citation>
    <scope>PHOSPHORYLATION [LARGE SCALE ANALYSIS] AT SER-129</scope>
    <scope>IDENTIFICATION BY MASS SPECTROMETRY [LARGE SCALE ANALYSIS]</scope>
    <source>
        <tissue>Brain</tissue>
        <tissue>Brown adipose tissue</tissue>
        <tissue>Heart</tissue>
        <tissue>Kidney</tissue>
        <tissue>Liver</tissue>
        <tissue>Lung</tissue>
        <tissue>Pancreas</tissue>
        <tissue>Spleen</tissue>
        <tissue>Testis</tissue>
    </source>
</reference>
<keyword id="KW-0007">Acetylation</keyword>
<keyword id="KW-0963">Cytoplasm</keyword>
<keyword id="KW-0560">Oxidoreductase</keyword>
<keyword id="KW-0597">Phosphoprotein</keyword>
<keyword id="KW-1185">Reference proteome</keyword>
<keyword id="KW-0808">Transferase</keyword>
<proteinExistence type="evidence at protein level"/>
<accession>O09131</accession>
<accession>Q3TH87</accession>
<comment type="function">
    <text evidence="1">Exhibits glutathione-dependent thiol transferase and dehydroascorbate reductase activities. Has S-(phenacyl)glutathione reductase activity. Also has glutathione S-transferase activity. Participates in the biotransformation of inorganic arsenic and reduces monomethylarsonic acid (MMA) and dimethylarsonic acid.</text>
</comment>
<comment type="catalytic activity">
    <reaction evidence="1">
        <text>RX + glutathione = an S-substituted glutathione + a halide anion + H(+)</text>
        <dbReference type="Rhea" id="RHEA:16437"/>
        <dbReference type="ChEBI" id="CHEBI:15378"/>
        <dbReference type="ChEBI" id="CHEBI:16042"/>
        <dbReference type="ChEBI" id="CHEBI:17792"/>
        <dbReference type="ChEBI" id="CHEBI:57925"/>
        <dbReference type="ChEBI" id="CHEBI:90779"/>
        <dbReference type="EC" id="2.5.1.18"/>
    </reaction>
</comment>
<comment type="catalytic activity">
    <reaction evidence="1">
        <text>L-dehydroascorbate + 2 glutathione = glutathione disulfide + L-ascorbate</text>
        <dbReference type="Rhea" id="RHEA:24424"/>
        <dbReference type="ChEBI" id="CHEBI:38290"/>
        <dbReference type="ChEBI" id="CHEBI:57925"/>
        <dbReference type="ChEBI" id="CHEBI:58297"/>
        <dbReference type="ChEBI" id="CHEBI:58539"/>
        <dbReference type="EC" id="1.8.5.1"/>
    </reaction>
</comment>
<comment type="catalytic activity">
    <reaction evidence="1">
        <text>methylarsonate + 2 glutathione + H(+) = methylarsonous acid + glutathione disulfide + H2O</text>
        <dbReference type="Rhea" id="RHEA:15969"/>
        <dbReference type="ChEBI" id="CHEBI:15377"/>
        <dbReference type="ChEBI" id="CHEBI:15378"/>
        <dbReference type="ChEBI" id="CHEBI:17826"/>
        <dbReference type="ChEBI" id="CHEBI:33409"/>
        <dbReference type="ChEBI" id="CHEBI:57925"/>
        <dbReference type="ChEBI" id="CHEBI:58297"/>
        <dbReference type="EC" id="1.20.4.2"/>
    </reaction>
</comment>
<comment type="subunit">
    <text evidence="1">Homodimer.</text>
</comment>
<comment type="subcellular location">
    <subcellularLocation>
        <location evidence="1">Cytoplasm</location>
        <location evidence="1">Cytosol</location>
    </subcellularLocation>
</comment>
<comment type="similarity">
    <text evidence="2">Belongs to the GST superfamily. Omega family.</text>
</comment>
<sequence length="240" mass="27498">MSGESSRSLGKGSAPPGPVPEGQIRVYSMRFCPFAQRTLMVLKAKGIRHEVININLKNKPEWFFEKNPLGLVPVLENSQGHLVTESVITCEYLDEAYPEKKLFPDDPYKKARQKMTLESFSKVPPLIASFVRSKRKEDSPNLREALENEFKKLEEGMDNYKSFLGGDSPSMVDYLTWPWFQRLEALELKECLAHTPKLKLWMAAMQQDPVASSHKIDAKTYREYLNLYLQDSPEACDYGL</sequence>
<organism>
    <name type="scientific">Mus musculus</name>
    <name type="common">Mouse</name>
    <dbReference type="NCBI Taxonomy" id="10090"/>
    <lineage>
        <taxon>Eukaryota</taxon>
        <taxon>Metazoa</taxon>
        <taxon>Chordata</taxon>
        <taxon>Craniata</taxon>
        <taxon>Vertebrata</taxon>
        <taxon>Euteleostomi</taxon>
        <taxon>Mammalia</taxon>
        <taxon>Eutheria</taxon>
        <taxon>Euarchontoglires</taxon>
        <taxon>Glires</taxon>
        <taxon>Rodentia</taxon>
        <taxon>Myomorpha</taxon>
        <taxon>Muroidea</taxon>
        <taxon>Muridae</taxon>
        <taxon>Murinae</taxon>
        <taxon>Mus</taxon>
        <taxon>Mus</taxon>
    </lineage>
</organism>